<gene>
    <name evidence="1" type="primary">fhs</name>
    <name type="ordered locus">NWMN_1625</name>
</gene>
<feature type="chain" id="PRO_1000073557" description="Formate--tetrahydrofolate ligase">
    <location>
        <begin position="1"/>
        <end position="555"/>
    </location>
</feature>
<feature type="binding site" evidence="1">
    <location>
        <begin position="65"/>
        <end position="72"/>
    </location>
    <ligand>
        <name>ATP</name>
        <dbReference type="ChEBI" id="CHEBI:30616"/>
    </ligand>
</feature>
<reference key="1">
    <citation type="journal article" date="2008" name="J. Bacteriol.">
        <title>Genome sequence of Staphylococcus aureus strain Newman and comparative analysis of staphylococcal genomes: polymorphism and evolution of two major pathogenicity islands.</title>
        <authorList>
            <person name="Baba T."/>
            <person name="Bae T."/>
            <person name="Schneewind O."/>
            <person name="Takeuchi F."/>
            <person name="Hiramatsu K."/>
        </authorList>
    </citation>
    <scope>NUCLEOTIDE SEQUENCE [LARGE SCALE GENOMIC DNA]</scope>
    <source>
        <strain>Newman</strain>
    </source>
</reference>
<evidence type="ECO:0000255" key="1">
    <source>
        <dbReference type="HAMAP-Rule" id="MF_01543"/>
    </source>
</evidence>
<sequence length="555" mass="59884">MTHLSDLDIANQSTLQPIKDIAASVGISEDALEPYGHYKAKIDINKITPRENKGKVVLVTAMSPTPAGEGKSTVTVGLADAFHELNKNVMVALREPALGPTFGIKGGATGGGYAQVLPMEDINLHFNGDFHAITTANNALSAFIDNHIHQGNELGIDQRRIEWKRVLDMNDRALRHVNVGLGGPTNGVPREDGFNITVASEIMAILCLSRSIKDLKDKISRITIGYTRDRKPVTVADLKVEGALAMILKDAIKPNLVQSIEGTPALVHGGPFANIAHGCNSILATETARDLADIVVTEAGFGSDLGAEKFMDIKVREAGFDPAAVVVVATIRALKMHGGVAKDNLKEENVEAVKAGIVNLERHVNNIKKFGVEPVVAINAFIHDTDAEVEYVKSWAKENNVRIALTEVWKKGGKGGVDLANEVLEVIDQPNSFKPLYELELPLEQKIEKIVTEIYGGSKVTFSSKAQKQLKQFKENGWDNYPVCMAKTQYSFSDDQTLLGAPSGFEITIRELEAKTGAGFIVALTGAIMTMPGLPKKPAALNMDVTDDGHAIGLF</sequence>
<protein>
    <recommendedName>
        <fullName evidence="1">Formate--tetrahydrofolate ligase</fullName>
        <ecNumber evidence="1">6.3.4.3</ecNumber>
    </recommendedName>
    <alternativeName>
        <fullName evidence="1">Formyltetrahydrofolate synthetase</fullName>
        <shortName evidence="1">FHS</shortName>
        <shortName evidence="1">FTHFS</shortName>
    </alternativeName>
</protein>
<accession>A6QHR5</accession>
<dbReference type="EC" id="6.3.4.3" evidence="1"/>
<dbReference type="EMBL" id="AP009351">
    <property type="protein sequence ID" value="BAF67897.1"/>
    <property type="molecule type" value="Genomic_DNA"/>
</dbReference>
<dbReference type="RefSeq" id="WP_000149404.1">
    <property type="nucleotide sequence ID" value="NZ_JBBIAE010000009.1"/>
</dbReference>
<dbReference type="SMR" id="A6QHR5"/>
<dbReference type="KEGG" id="sae:NWMN_1625"/>
<dbReference type="HOGENOM" id="CLU_003601_3_3_9"/>
<dbReference type="UniPathway" id="UPA00193"/>
<dbReference type="Proteomes" id="UP000006386">
    <property type="component" value="Chromosome"/>
</dbReference>
<dbReference type="GO" id="GO:0005524">
    <property type="term" value="F:ATP binding"/>
    <property type="evidence" value="ECO:0007669"/>
    <property type="project" value="UniProtKB-UniRule"/>
</dbReference>
<dbReference type="GO" id="GO:0004329">
    <property type="term" value="F:formate-tetrahydrofolate ligase activity"/>
    <property type="evidence" value="ECO:0007669"/>
    <property type="project" value="UniProtKB-UniRule"/>
</dbReference>
<dbReference type="GO" id="GO:0035999">
    <property type="term" value="P:tetrahydrofolate interconversion"/>
    <property type="evidence" value="ECO:0007669"/>
    <property type="project" value="UniProtKB-UniRule"/>
</dbReference>
<dbReference type="CDD" id="cd00477">
    <property type="entry name" value="FTHFS"/>
    <property type="match status" value="1"/>
</dbReference>
<dbReference type="FunFam" id="3.30.1510.10:FF:000001">
    <property type="entry name" value="Formate--tetrahydrofolate ligase"/>
    <property type="match status" value="1"/>
</dbReference>
<dbReference type="FunFam" id="3.10.410.10:FF:000001">
    <property type="entry name" value="Putative formate--tetrahydrofolate ligase"/>
    <property type="match status" value="1"/>
</dbReference>
<dbReference type="Gene3D" id="3.30.1510.10">
    <property type="entry name" value="Domain 2, N(10)-formyltetrahydrofolate synthetase"/>
    <property type="match status" value="1"/>
</dbReference>
<dbReference type="Gene3D" id="3.10.410.10">
    <property type="entry name" value="Formyltetrahydrofolate synthetase, domain 3"/>
    <property type="match status" value="1"/>
</dbReference>
<dbReference type="Gene3D" id="3.40.50.300">
    <property type="entry name" value="P-loop containing nucleotide triphosphate hydrolases"/>
    <property type="match status" value="1"/>
</dbReference>
<dbReference type="HAMAP" id="MF_01543">
    <property type="entry name" value="FTHFS"/>
    <property type="match status" value="1"/>
</dbReference>
<dbReference type="InterPro" id="IPR000559">
    <property type="entry name" value="Formate_THF_ligase"/>
</dbReference>
<dbReference type="InterPro" id="IPR020628">
    <property type="entry name" value="Formate_THF_ligase_CS"/>
</dbReference>
<dbReference type="InterPro" id="IPR027417">
    <property type="entry name" value="P-loop_NTPase"/>
</dbReference>
<dbReference type="NCBIfam" id="NF010030">
    <property type="entry name" value="PRK13505.1"/>
    <property type="match status" value="1"/>
</dbReference>
<dbReference type="Pfam" id="PF01268">
    <property type="entry name" value="FTHFS"/>
    <property type="match status" value="1"/>
</dbReference>
<dbReference type="SUPFAM" id="SSF52540">
    <property type="entry name" value="P-loop containing nucleoside triphosphate hydrolases"/>
    <property type="match status" value="1"/>
</dbReference>
<dbReference type="PROSITE" id="PS00721">
    <property type="entry name" value="FTHFS_1"/>
    <property type="match status" value="1"/>
</dbReference>
<dbReference type="PROSITE" id="PS00722">
    <property type="entry name" value="FTHFS_2"/>
    <property type="match status" value="1"/>
</dbReference>
<comment type="catalytic activity">
    <reaction evidence="1">
        <text>(6S)-5,6,7,8-tetrahydrofolate + formate + ATP = (6R)-10-formyltetrahydrofolate + ADP + phosphate</text>
        <dbReference type="Rhea" id="RHEA:20221"/>
        <dbReference type="ChEBI" id="CHEBI:15740"/>
        <dbReference type="ChEBI" id="CHEBI:30616"/>
        <dbReference type="ChEBI" id="CHEBI:43474"/>
        <dbReference type="ChEBI" id="CHEBI:57453"/>
        <dbReference type="ChEBI" id="CHEBI:195366"/>
        <dbReference type="ChEBI" id="CHEBI:456216"/>
        <dbReference type="EC" id="6.3.4.3"/>
    </reaction>
</comment>
<comment type="pathway">
    <text evidence="1">One-carbon metabolism; tetrahydrofolate interconversion.</text>
</comment>
<comment type="similarity">
    <text evidence="1">Belongs to the formate--tetrahydrofolate ligase family.</text>
</comment>
<proteinExistence type="inferred from homology"/>
<keyword id="KW-0067">ATP-binding</keyword>
<keyword id="KW-0436">Ligase</keyword>
<keyword id="KW-0547">Nucleotide-binding</keyword>
<keyword id="KW-0554">One-carbon metabolism</keyword>
<organism>
    <name type="scientific">Staphylococcus aureus (strain Newman)</name>
    <dbReference type="NCBI Taxonomy" id="426430"/>
    <lineage>
        <taxon>Bacteria</taxon>
        <taxon>Bacillati</taxon>
        <taxon>Bacillota</taxon>
        <taxon>Bacilli</taxon>
        <taxon>Bacillales</taxon>
        <taxon>Staphylococcaceae</taxon>
        <taxon>Staphylococcus</taxon>
    </lineage>
</organism>
<name>FTHS_STAAE</name>